<protein>
    <recommendedName>
        <fullName evidence="3">Chitin-binding protein 3</fullName>
        <shortName evidence="3">Mo-CBP3</shortName>
    </recommendedName>
</protein>
<evidence type="ECO:0000269" key="1">
    <source>
    </source>
</evidence>
<evidence type="ECO:0000269" key="2">
    <source>
    </source>
</evidence>
<evidence type="ECO:0000303" key="3">
    <source>
    </source>
</evidence>
<keyword id="KW-0929">Antimicrobial</keyword>
<keyword id="KW-0147">Chitin-binding</keyword>
<keyword id="KW-0903">Direct protein sequencing</keyword>
<keyword id="KW-0295">Fungicide</keyword>
<sequence>CPAIQRCCQQLRNIQPPCRCCQ</sequence>
<comment type="function">
    <text evidence="1 2">Chitin-binding protein (PubMed:23193603). Has antifungal activity against F.solani, F.oxysporum, C.musae and C.gloesporoides but not against P.oligandrum (PubMed:23193603). Depending on concentration the antifungal activity can be fungistatic or fungicidal (PubMed:23193603). Inhibits both spore germination and mycelial growth in F.solani at a concentration of 0.1 mg/ml (PubMed:23193603). Has antifungal activity against C.krusei, C.albicans, C.tropicalis and C.parapsilosis (PubMed:28634471). Has no chitinase, beta-glucanase or hemagglutinating activity (PubMed:23193603). Acts as a flocculent (PubMed:23193603).</text>
</comment>
<comment type="PTM">
    <text evidence="1">Glycosylated; contains 2.5% carbohydrates.</text>
</comment>
<comment type="miscellaneous">
    <text>On the 2D-gel the determined pI of this protein is: 10.8, its MW is: 14.34 kDa.</text>
</comment>
<dbReference type="GO" id="GO:0008061">
    <property type="term" value="F:chitin binding"/>
    <property type="evidence" value="ECO:0007669"/>
    <property type="project" value="UniProtKB-KW"/>
</dbReference>
<dbReference type="GO" id="GO:0050832">
    <property type="term" value="P:defense response to fungus"/>
    <property type="evidence" value="ECO:0000314"/>
    <property type="project" value="UniProtKB"/>
</dbReference>
<dbReference type="GO" id="GO:0031640">
    <property type="term" value="P:killing of cells of another organism"/>
    <property type="evidence" value="ECO:0007669"/>
    <property type="project" value="UniProtKB-KW"/>
</dbReference>
<accession>P86528</accession>
<organism>
    <name type="scientific">Moringa oleifera</name>
    <name type="common">Horseradish tree</name>
    <name type="synonym">Moringa pterygosperma</name>
    <dbReference type="NCBI Taxonomy" id="3735"/>
    <lineage>
        <taxon>Eukaryota</taxon>
        <taxon>Viridiplantae</taxon>
        <taxon>Streptophyta</taxon>
        <taxon>Embryophyta</taxon>
        <taxon>Tracheophyta</taxon>
        <taxon>Spermatophyta</taxon>
        <taxon>Magnoliopsida</taxon>
        <taxon>eudicotyledons</taxon>
        <taxon>Gunneridae</taxon>
        <taxon>Pentapetalae</taxon>
        <taxon>rosids</taxon>
        <taxon>malvids</taxon>
        <taxon>Brassicales</taxon>
        <taxon>Moringaceae</taxon>
        <taxon>Moringa</taxon>
    </lineage>
</organism>
<proteinExistence type="evidence at protein level"/>
<reference key="1">
    <citation type="journal article" date="2012" name="Biopolymers">
        <title>A novel chitin-binding protein from Moringa oleifera seed with potential for plant disease control.</title>
        <authorList>
            <person name="Gifoni J.M."/>
            <person name="Oliveira J.T."/>
            <person name="Oliveira H.D."/>
            <person name="Batista A.B."/>
            <person name="Pereira M.L."/>
            <person name="Gomes A.S."/>
            <person name="Oliveira H.P."/>
            <person name="Grangeiro T.B."/>
            <person name="Vasconcelos I.M."/>
        </authorList>
    </citation>
    <scope>PROTEIN SEQUENCE</scope>
    <scope>FUNCTION</scope>
    <scope>GLYCOSYLATION</scope>
    <source>
        <tissue>Seed</tissue>
    </source>
</reference>
<reference key="2">
    <citation type="journal article" date="2017" name="Front. Microbiol.">
        <title>A Chitin-binding Protein Purified from Moringa oleifera Seeds Presents Anticandidal Activity by Increasing Cell Membrane Permeability and Reactive Oxygen Species Production.</title>
        <authorList>
            <person name="Neto J.X.S."/>
            <person name="Pereira M.L."/>
            <person name="Oliveira J.T.A."/>
            <person name="Rocha-Bezerra L.C.B."/>
            <person name="Lopes T.D.P."/>
            <person name="Costa H.P.S."/>
            <person name="Sousa D.O.B."/>
            <person name="Rocha B.A.M."/>
            <person name="Grangeiro T.B."/>
            <person name="Freire J.E.C."/>
            <person name="Monteiro-Moreira A.C.O."/>
            <person name="Lobo M.D.P."/>
            <person name="Brilhante R.S.N."/>
            <person name="Vasconcelos I.M."/>
        </authorList>
    </citation>
    <scope>FUNCTION</scope>
</reference>
<name>CBP3_MOROL</name>
<feature type="chain" id="PRO_0000394695" description="Chitin-binding protein 3">
    <location>
        <begin position="1"/>
        <end position="22" status="greater than"/>
    </location>
</feature>
<feature type="non-terminal residue">
    <location>
        <position position="22"/>
    </location>
</feature>